<name>Y2116_DICDI</name>
<gene>
    <name type="ORF">DDB_G0293776</name>
</gene>
<protein>
    <recommendedName>
        <fullName>Putative uncharacterized protein DDB_G0293776</fullName>
    </recommendedName>
</protein>
<dbReference type="EMBL" id="AAFI02000219">
    <property type="protein sequence ID" value="EAL60565.1"/>
    <property type="molecule type" value="Genomic_DNA"/>
</dbReference>
<dbReference type="RefSeq" id="XP_628981.1">
    <property type="nucleotide sequence ID" value="XM_628979.1"/>
</dbReference>
<dbReference type="PaxDb" id="44689-DDB0192116"/>
<dbReference type="EnsemblProtists" id="EAL60565">
    <property type="protein sequence ID" value="EAL60565"/>
    <property type="gene ID" value="DDB_G0293776"/>
</dbReference>
<dbReference type="GeneID" id="8629413"/>
<dbReference type="KEGG" id="ddi:DDB_G0293776"/>
<dbReference type="dictyBase" id="DDB_G0293776"/>
<dbReference type="VEuPathDB" id="AmoebaDB:DDB_G0293776"/>
<dbReference type="HOGENOM" id="CLU_2643203_0_0_1"/>
<dbReference type="InParanoid" id="Q54BB3"/>
<dbReference type="PRO" id="PR:Q54BB3"/>
<dbReference type="Proteomes" id="UP000002195">
    <property type="component" value="Chromosome 6"/>
</dbReference>
<accession>Q54BB3</accession>
<proteinExistence type="predicted"/>
<keyword id="KW-1185">Reference proteome</keyword>
<feature type="chain" id="PRO_0000343937" description="Putative uncharacterized protein DDB_G0293776">
    <location>
        <begin position="1"/>
        <end position="77"/>
    </location>
</feature>
<sequence length="77" mass="9222">MEDFNPTTLNSPKLSRFINYSFISNNNNDKIIFYKYAISEPSYFRRITFRETPIDIDLKFPLNPFQGIFFKNPSIHH</sequence>
<organism>
    <name type="scientific">Dictyostelium discoideum</name>
    <name type="common">Social amoeba</name>
    <dbReference type="NCBI Taxonomy" id="44689"/>
    <lineage>
        <taxon>Eukaryota</taxon>
        <taxon>Amoebozoa</taxon>
        <taxon>Evosea</taxon>
        <taxon>Eumycetozoa</taxon>
        <taxon>Dictyostelia</taxon>
        <taxon>Dictyosteliales</taxon>
        <taxon>Dictyosteliaceae</taxon>
        <taxon>Dictyostelium</taxon>
    </lineage>
</organism>
<reference key="1">
    <citation type="journal article" date="2005" name="Nature">
        <title>The genome of the social amoeba Dictyostelium discoideum.</title>
        <authorList>
            <person name="Eichinger L."/>
            <person name="Pachebat J.A."/>
            <person name="Gloeckner G."/>
            <person name="Rajandream M.A."/>
            <person name="Sucgang R."/>
            <person name="Berriman M."/>
            <person name="Song J."/>
            <person name="Olsen R."/>
            <person name="Szafranski K."/>
            <person name="Xu Q."/>
            <person name="Tunggal B."/>
            <person name="Kummerfeld S."/>
            <person name="Madera M."/>
            <person name="Konfortov B.A."/>
            <person name="Rivero F."/>
            <person name="Bankier A.T."/>
            <person name="Lehmann R."/>
            <person name="Hamlin N."/>
            <person name="Davies R."/>
            <person name="Gaudet P."/>
            <person name="Fey P."/>
            <person name="Pilcher K."/>
            <person name="Chen G."/>
            <person name="Saunders D."/>
            <person name="Sodergren E.J."/>
            <person name="Davis P."/>
            <person name="Kerhornou A."/>
            <person name="Nie X."/>
            <person name="Hall N."/>
            <person name="Anjard C."/>
            <person name="Hemphill L."/>
            <person name="Bason N."/>
            <person name="Farbrother P."/>
            <person name="Desany B."/>
            <person name="Just E."/>
            <person name="Morio T."/>
            <person name="Rost R."/>
            <person name="Churcher C.M."/>
            <person name="Cooper J."/>
            <person name="Haydock S."/>
            <person name="van Driessche N."/>
            <person name="Cronin A."/>
            <person name="Goodhead I."/>
            <person name="Muzny D.M."/>
            <person name="Mourier T."/>
            <person name="Pain A."/>
            <person name="Lu M."/>
            <person name="Harper D."/>
            <person name="Lindsay R."/>
            <person name="Hauser H."/>
            <person name="James K.D."/>
            <person name="Quiles M."/>
            <person name="Madan Babu M."/>
            <person name="Saito T."/>
            <person name="Buchrieser C."/>
            <person name="Wardroper A."/>
            <person name="Felder M."/>
            <person name="Thangavelu M."/>
            <person name="Johnson D."/>
            <person name="Knights A."/>
            <person name="Loulseged H."/>
            <person name="Mungall K.L."/>
            <person name="Oliver K."/>
            <person name="Price C."/>
            <person name="Quail M.A."/>
            <person name="Urushihara H."/>
            <person name="Hernandez J."/>
            <person name="Rabbinowitsch E."/>
            <person name="Steffen D."/>
            <person name="Sanders M."/>
            <person name="Ma J."/>
            <person name="Kohara Y."/>
            <person name="Sharp S."/>
            <person name="Simmonds M.N."/>
            <person name="Spiegler S."/>
            <person name="Tivey A."/>
            <person name="Sugano S."/>
            <person name="White B."/>
            <person name="Walker D."/>
            <person name="Woodward J.R."/>
            <person name="Winckler T."/>
            <person name="Tanaka Y."/>
            <person name="Shaulsky G."/>
            <person name="Schleicher M."/>
            <person name="Weinstock G.M."/>
            <person name="Rosenthal A."/>
            <person name="Cox E.C."/>
            <person name="Chisholm R.L."/>
            <person name="Gibbs R.A."/>
            <person name="Loomis W.F."/>
            <person name="Platzer M."/>
            <person name="Kay R.R."/>
            <person name="Williams J.G."/>
            <person name="Dear P.H."/>
            <person name="Noegel A.A."/>
            <person name="Barrell B.G."/>
            <person name="Kuspa A."/>
        </authorList>
    </citation>
    <scope>NUCLEOTIDE SEQUENCE [LARGE SCALE GENOMIC DNA]</scope>
    <source>
        <strain>AX4</strain>
    </source>
</reference>